<gene>
    <name evidence="1" type="primary">lipA</name>
    <name type="ordered locus">HS_0315</name>
</gene>
<proteinExistence type="inferred from homology"/>
<name>LIPA_HISS1</name>
<protein>
    <recommendedName>
        <fullName evidence="1">Lipoyl synthase</fullName>
        <ecNumber evidence="1">2.8.1.8</ecNumber>
    </recommendedName>
    <alternativeName>
        <fullName evidence="1">Lip-syn</fullName>
        <shortName evidence="1">LS</shortName>
    </alternativeName>
    <alternativeName>
        <fullName evidence="1">Lipoate synthase</fullName>
    </alternativeName>
    <alternativeName>
        <fullName evidence="1">Lipoic acid synthase</fullName>
    </alternativeName>
    <alternativeName>
        <fullName evidence="1">Sulfur insertion protein LipA</fullName>
    </alternativeName>
</protein>
<keyword id="KW-0004">4Fe-4S</keyword>
<keyword id="KW-0963">Cytoplasm</keyword>
<keyword id="KW-0408">Iron</keyword>
<keyword id="KW-0411">Iron-sulfur</keyword>
<keyword id="KW-0479">Metal-binding</keyword>
<keyword id="KW-0949">S-adenosyl-L-methionine</keyword>
<keyword id="KW-0808">Transferase</keyword>
<organism>
    <name type="scientific">Histophilus somni (strain 129Pt)</name>
    <name type="common">Haemophilus somnus</name>
    <dbReference type="NCBI Taxonomy" id="205914"/>
    <lineage>
        <taxon>Bacteria</taxon>
        <taxon>Pseudomonadati</taxon>
        <taxon>Pseudomonadota</taxon>
        <taxon>Gammaproteobacteria</taxon>
        <taxon>Pasteurellales</taxon>
        <taxon>Pasteurellaceae</taxon>
        <taxon>Histophilus</taxon>
    </lineage>
</organism>
<sequence length="320" mass="36285">MTTPFKMERGVKYRDAAKTSIIPVKNIDPNQELLKKPEWMKIKLPANSAKINSIKNGMRRHGLHSVCEEASCPNLHECFNHGTATFMILGAICTRRCPFCDVAHGKPLPPDPDEPKKLAETIQDMKLRYVVITSVDRDDLPDRGAGHFAECVKEIRKLNPGIKIEILVPDFRGRIEQALEKLKDNPPDVFNHNLENVPRLYREIRPGADYNWSLKLLKEFKTIFPHIPTKSGIMVGLGETNEEILQVMQDLRDNGVTMLTLGQYLQPSRHHLPVARYVPPEEFDDFRDKAEKMGFEHAACGPFVRSSYHADLQASGGLVK</sequence>
<reference key="1">
    <citation type="journal article" date="2007" name="J. Bacteriol.">
        <title>Complete genome sequence of Haemophilus somnus (Histophilus somni) strain 129Pt and comparison to Haemophilus ducreyi 35000HP and Haemophilus influenzae Rd.</title>
        <authorList>
            <person name="Challacombe J.F."/>
            <person name="Duncan A.J."/>
            <person name="Brettin T.S."/>
            <person name="Bruce D."/>
            <person name="Chertkov O."/>
            <person name="Detter J.C."/>
            <person name="Han C.S."/>
            <person name="Misra M."/>
            <person name="Richardson P."/>
            <person name="Tapia R."/>
            <person name="Thayer N."/>
            <person name="Xie G."/>
            <person name="Inzana T.J."/>
        </authorList>
    </citation>
    <scope>NUCLEOTIDE SEQUENCE [LARGE SCALE GENOMIC DNA]</scope>
    <source>
        <strain>129Pt</strain>
    </source>
</reference>
<accession>Q0I1H8</accession>
<comment type="function">
    <text evidence="1">Catalyzes the radical-mediated insertion of two sulfur atoms into the C-6 and C-8 positions of the octanoyl moiety bound to the lipoyl domains of lipoate-dependent enzymes, thereby converting the octanoylated domains into lipoylated derivatives.</text>
</comment>
<comment type="catalytic activity">
    <reaction evidence="1">
        <text>[[Fe-S] cluster scaffold protein carrying a second [4Fe-4S](2+) cluster] + N(6)-octanoyl-L-lysyl-[protein] + 2 oxidized [2Fe-2S]-[ferredoxin] + 2 S-adenosyl-L-methionine + 4 H(+) = [[Fe-S] cluster scaffold protein] + N(6)-[(R)-dihydrolipoyl]-L-lysyl-[protein] + 4 Fe(3+) + 2 hydrogen sulfide + 2 5'-deoxyadenosine + 2 L-methionine + 2 reduced [2Fe-2S]-[ferredoxin]</text>
        <dbReference type="Rhea" id="RHEA:16585"/>
        <dbReference type="Rhea" id="RHEA-COMP:9928"/>
        <dbReference type="Rhea" id="RHEA-COMP:10000"/>
        <dbReference type="Rhea" id="RHEA-COMP:10001"/>
        <dbReference type="Rhea" id="RHEA-COMP:10475"/>
        <dbReference type="Rhea" id="RHEA-COMP:14568"/>
        <dbReference type="Rhea" id="RHEA-COMP:14569"/>
        <dbReference type="ChEBI" id="CHEBI:15378"/>
        <dbReference type="ChEBI" id="CHEBI:17319"/>
        <dbReference type="ChEBI" id="CHEBI:29034"/>
        <dbReference type="ChEBI" id="CHEBI:29919"/>
        <dbReference type="ChEBI" id="CHEBI:33722"/>
        <dbReference type="ChEBI" id="CHEBI:33737"/>
        <dbReference type="ChEBI" id="CHEBI:33738"/>
        <dbReference type="ChEBI" id="CHEBI:57844"/>
        <dbReference type="ChEBI" id="CHEBI:59789"/>
        <dbReference type="ChEBI" id="CHEBI:78809"/>
        <dbReference type="ChEBI" id="CHEBI:83100"/>
        <dbReference type="EC" id="2.8.1.8"/>
    </reaction>
</comment>
<comment type="cofactor">
    <cofactor evidence="1">
        <name>[4Fe-4S] cluster</name>
        <dbReference type="ChEBI" id="CHEBI:49883"/>
    </cofactor>
    <text evidence="1">Binds 2 [4Fe-4S] clusters per subunit. One cluster is coordinated with 3 cysteines and an exchangeable S-adenosyl-L-methionine.</text>
</comment>
<comment type="pathway">
    <text evidence="1">Protein modification; protein lipoylation via endogenous pathway; protein N(6)-(lipoyl)lysine from octanoyl-[acyl-carrier-protein]: step 2/2.</text>
</comment>
<comment type="subcellular location">
    <subcellularLocation>
        <location evidence="1">Cytoplasm</location>
    </subcellularLocation>
</comment>
<comment type="similarity">
    <text evidence="1">Belongs to the radical SAM superfamily. Lipoyl synthase family.</text>
</comment>
<comment type="sequence caution" evidence="3">
    <conflict type="erroneous initiation">
        <sequence resource="EMBL-CDS" id="ABI24593"/>
    </conflict>
</comment>
<dbReference type="EC" id="2.8.1.8" evidence="1"/>
<dbReference type="EMBL" id="CP000436">
    <property type="protein sequence ID" value="ABI24593.1"/>
    <property type="status" value="ALT_INIT"/>
    <property type="molecule type" value="Genomic_DNA"/>
</dbReference>
<dbReference type="SMR" id="Q0I1H8"/>
<dbReference type="KEGG" id="hso:HS_0315"/>
<dbReference type="eggNOG" id="COG0320">
    <property type="taxonomic scope" value="Bacteria"/>
</dbReference>
<dbReference type="HOGENOM" id="CLU_033144_2_1_6"/>
<dbReference type="UniPathway" id="UPA00538">
    <property type="reaction ID" value="UER00593"/>
</dbReference>
<dbReference type="GO" id="GO:0005737">
    <property type="term" value="C:cytoplasm"/>
    <property type="evidence" value="ECO:0007669"/>
    <property type="project" value="UniProtKB-SubCell"/>
</dbReference>
<dbReference type="GO" id="GO:0051539">
    <property type="term" value="F:4 iron, 4 sulfur cluster binding"/>
    <property type="evidence" value="ECO:0007669"/>
    <property type="project" value="UniProtKB-UniRule"/>
</dbReference>
<dbReference type="GO" id="GO:0016992">
    <property type="term" value="F:lipoate synthase activity"/>
    <property type="evidence" value="ECO:0007669"/>
    <property type="project" value="UniProtKB-UniRule"/>
</dbReference>
<dbReference type="GO" id="GO:0046872">
    <property type="term" value="F:metal ion binding"/>
    <property type="evidence" value="ECO:0007669"/>
    <property type="project" value="UniProtKB-KW"/>
</dbReference>
<dbReference type="CDD" id="cd01335">
    <property type="entry name" value="Radical_SAM"/>
    <property type="match status" value="1"/>
</dbReference>
<dbReference type="FunFam" id="3.20.20.70:FF:000023">
    <property type="entry name" value="Lipoyl synthase"/>
    <property type="match status" value="1"/>
</dbReference>
<dbReference type="Gene3D" id="3.20.20.70">
    <property type="entry name" value="Aldolase class I"/>
    <property type="match status" value="1"/>
</dbReference>
<dbReference type="HAMAP" id="MF_00206">
    <property type="entry name" value="Lipoyl_synth"/>
    <property type="match status" value="1"/>
</dbReference>
<dbReference type="InterPro" id="IPR013785">
    <property type="entry name" value="Aldolase_TIM"/>
</dbReference>
<dbReference type="InterPro" id="IPR006638">
    <property type="entry name" value="Elp3/MiaA/NifB-like_rSAM"/>
</dbReference>
<dbReference type="InterPro" id="IPR031691">
    <property type="entry name" value="LIAS_N"/>
</dbReference>
<dbReference type="InterPro" id="IPR003698">
    <property type="entry name" value="Lipoyl_synth"/>
</dbReference>
<dbReference type="InterPro" id="IPR007197">
    <property type="entry name" value="rSAM"/>
</dbReference>
<dbReference type="NCBIfam" id="TIGR00510">
    <property type="entry name" value="lipA"/>
    <property type="match status" value="1"/>
</dbReference>
<dbReference type="NCBIfam" id="NF004019">
    <property type="entry name" value="PRK05481.1"/>
    <property type="match status" value="1"/>
</dbReference>
<dbReference type="NCBIfam" id="NF009544">
    <property type="entry name" value="PRK12928.1"/>
    <property type="match status" value="1"/>
</dbReference>
<dbReference type="PANTHER" id="PTHR10949">
    <property type="entry name" value="LIPOYL SYNTHASE"/>
    <property type="match status" value="1"/>
</dbReference>
<dbReference type="PANTHER" id="PTHR10949:SF0">
    <property type="entry name" value="LIPOYL SYNTHASE, MITOCHONDRIAL"/>
    <property type="match status" value="1"/>
</dbReference>
<dbReference type="Pfam" id="PF16881">
    <property type="entry name" value="LIAS_N"/>
    <property type="match status" value="1"/>
</dbReference>
<dbReference type="Pfam" id="PF04055">
    <property type="entry name" value="Radical_SAM"/>
    <property type="match status" value="1"/>
</dbReference>
<dbReference type="PIRSF" id="PIRSF005963">
    <property type="entry name" value="Lipoyl_synth"/>
    <property type="match status" value="1"/>
</dbReference>
<dbReference type="SFLD" id="SFLDF00271">
    <property type="entry name" value="lipoyl_synthase"/>
    <property type="match status" value="1"/>
</dbReference>
<dbReference type="SFLD" id="SFLDS00029">
    <property type="entry name" value="Radical_SAM"/>
    <property type="match status" value="1"/>
</dbReference>
<dbReference type="SMART" id="SM00729">
    <property type="entry name" value="Elp3"/>
    <property type="match status" value="1"/>
</dbReference>
<dbReference type="SUPFAM" id="SSF102114">
    <property type="entry name" value="Radical SAM enzymes"/>
    <property type="match status" value="1"/>
</dbReference>
<dbReference type="PROSITE" id="PS51918">
    <property type="entry name" value="RADICAL_SAM"/>
    <property type="match status" value="1"/>
</dbReference>
<feature type="chain" id="PRO_0000325261" description="Lipoyl synthase">
    <location>
        <begin position="1"/>
        <end position="320"/>
    </location>
</feature>
<feature type="domain" description="Radical SAM core" evidence="2">
    <location>
        <begin position="79"/>
        <end position="296"/>
    </location>
</feature>
<feature type="binding site" evidence="1">
    <location>
        <position position="67"/>
    </location>
    <ligand>
        <name>[4Fe-4S] cluster</name>
        <dbReference type="ChEBI" id="CHEBI:49883"/>
        <label>1</label>
    </ligand>
</feature>
<feature type="binding site" evidence="1">
    <location>
        <position position="72"/>
    </location>
    <ligand>
        <name>[4Fe-4S] cluster</name>
        <dbReference type="ChEBI" id="CHEBI:49883"/>
        <label>1</label>
    </ligand>
</feature>
<feature type="binding site" evidence="1">
    <location>
        <position position="78"/>
    </location>
    <ligand>
        <name>[4Fe-4S] cluster</name>
        <dbReference type="ChEBI" id="CHEBI:49883"/>
        <label>1</label>
    </ligand>
</feature>
<feature type="binding site" evidence="1">
    <location>
        <position position="93"/>
    </location>
    <ligand>
        <name>[4Fe-4S] cluster</name>
        <dbReference type="ChEBI" id="CHEBI:49883"/>
        <label>2</label>
        <note>4Fe-4S-S-AdoMet</note>
    </ligand>
</feature>
<feature type="binding site" evidence="1">
    <location>
        <position position="97"/>
    </location>
    <ligand>
        <name>[4Fe-4S] cluster</name>
        <dbReference type="ChEBI" id="CHEBI:49883"/>
        <label>2</label>
        <note>4Fe-4S-S-AdoMet</note>
    </ligand>
</feature>
<feature type="binding site" evidence="1">
    <location>
        <position position="100"/>
    </location>
    <ligand>
        <name>[4Fe-4S] cluster</name>
        <dbReference type="ChEBI" id="CHEBI:49883"/>
        <label>2</label>
        <note>4Fe-4S-S-AdoMet</note>
    </ligand>
</feature>
<feature type="binding site" evidence="1">
    <location>
        <position position="307"/>
    </location>
    <ligand>
        <name>[4Fe-4S] cluster</name>
        <dbReference type="ChEBI" id="CHEBI:49883"/>
        <label>1</label>
    </ligand>
</feature>
<evidence type="ECO:0000255" key="1">
    <source>
        <dbReference type="HAMAP-Rule" id="MF_00206"/>
    </source>
</evidence>
<evidence type="ECO:0000255" key="2">
    <source>
        <dbReference type="PROSITE-ProRule" id="PRU01266"/>
    </source>
</evidence>
<evidence type="ECO:0000305" key="3"/>